<comment type="function">
    <text evidence="1">Plays a role in the transport of magnesium and cobalt ions.</text>
</comment>
<comment type="similarity">
    <text evidence="3">Belongs to the UPF0053 family.</text>
</comment>
<accession>Q9CM13</accession>
<sequence length="300" mass="34683">MANEEQSNTYSTESHQKKSFFQSLFGRFFQGELKNREELVEVIRDSEQNELIDQNTREMIEGVMEIAELRVRDIMIPRSQIVFIHTDQNLDSCLDTIIVSAHSRFPVITDERDNIAGILHAKDLLRFLRSNAEEFDLMPLLRPAVIVPESKRVDRMLKDFRSERFHMAIVVDEFGAVSGLVTIEDILEQIVGDIEDEFDEEEIVNIRQLSRHTYAVRALTDIEDFNQQFNTHFADEEVDTIGGVVMQAFGYLPKRGEEITIENIGFKVTSADSRRLIQLRITVTDEQLAEIEKAEELKED</sequence>
<keyword id="KW-0129">CBS domain</keyword>
<keyword id="KW-0170">Cobalt</keyword>
<keyword id="KW-0460">Magnesium</keyword>
<keyword id="KW-1185">Reference proteome</keyword>
<keyword id="KW-0677">Repeat</keyword>
<keyword id="KW-0813">Transport</keyword>
<reference key="1">
    <citation type="journal article" date="2001" name="Proc. Natl. Acad. Sci. U.S.A.">
        <title>Complete genomic sequence of Pasteurella multocida Pm70.</title>
        <authorList>
            <person name="May B.J."/>
            <person name="Zhang Q."/>
            <person name="Li L.L."/>
            <person name="Paustian M.L."/>
            <person name="Whittam T.S."/>
            <person name="Kapur V."/>
        </authorList>
    </citation>
    <scope>NUCLEOTIDE SEQUENCE [LARGE SCALE GENOMIC DNA]</scope>
    <source>
        <strain>Pm70</strain>
    </source>
</reference>
<dbReference type="EMBL" id="AE004439">
    <property type="protein sequence ID" value="AAK03117.1"/>
    <property type="molecule type" value="Genomic_DNA"/>
</dbReference>
<dbReference type="RefSeq" id="WP_005733087.1">
    <property type="nucleotide sequence ID" value="NC_002663.1"/>
</dbReference>
<dbReference type="SMR" id="Q9CM13"/>
<dbReference type="STRING" id="272843.PM1033"/>
<dbReference type="EnsemblBacteria" id="AAK03117">
    <property type="protein sequence ID" value="AAK03117"/>
    <property type="gene ID" value="PM1033"/>
</dbReference>
<dbReference type="GeneID" id="77206348"/>
<dbReference type="KEGG" id="pmu:PM1033"/>
<dbReference type="HOGENOM" id="CLU_015237_3_0_6"/>
<dbReference type="OrthoDB" id="9797674at2"/>
<dbReference type="Proteomes" id="UP000000809">
    <property type="component" value="Chromosome"/>
</dbReference>
<dbReference type="GO" id="GO:0005886">
    <property type="term" value="C:plasma membrane"/>
    <property type="evidence" value="ECO:0007669"/>
    <property type="project" value="TreeGrafter"/>
</dbReference>
<dbReference type="GO" id="GO:0050660">
    <property type="term" value="F:flavin adenine dinucleotide binding"/>
    <property type="evidence" value="ECO:0007669"/>
    <property type="project" value="InterPro"/>
</dbReference>
<dbReference type="CDD" id="cd04590">
    <property type="entry name" value="CBS_pair_CorC_HlyC_assoc"/>
    <property type="match status" value="1"/>
</dbReference>
<dbReference type="FunFam" id="3.10.580.10:FF:000002">
    <property type="entry name" value="Magnesium/cobalt efflux protein CorC"/>
    <property type="match status" value="1"/>
</dbReference>
<dbReference type="Gene3D" id="3.30.465.10">
    <property type="match status" value="1"/>
</dbReference>
<dbReference type="Gene3D" id="3.10.580.10">
    <property type="entry name" value="CBS-domain"/>
    <property type="match status" value="1"/>
</dbReference>
<dbReference type="InterPro" id="IPR000644">
    <property type="entry name" value="CBS_dom"/>
</dbReference>
<dbReference type="InterPro" id="IPR046342">
    <property type="entry name" value="CBS_dom_sf"/>
</dbReference>
<dbReference type="InterPro" id="IPR054115">
    <property type="entry name" value="CorC_N"/>
</dbReference>
<dbReference type="InterPro" id="IPR036318">
    <property type="entry name" value="FAD-bd_PCMH-like_sf"/>
</dbReference>
<dbReference type="InterPro" id="IPR016169">
    <property type="entry name" value="FAD-bd_PCMH_sub2"/>
</dbReference>
<dbReference type="InterPro" id="IPR044751">
    <property type="entry name" value="Ion_transp-like_CBS"/>
</dbReference>
<dbReference type="InterPro" id="IPR005170">
    <property type="entry name" value="Transptr-assoc_dom"/>
</dbReference>
<dbReference type="NCBIfam" id="NF011675">
    <property type="entry name" value="PRK15094.1"/>
    <property type="match status" value="1"/>
</dbReference>
<dbReference type="PANTHER" id="PTHR22777">
    <property type="entry name" value="HEMOLYSIN-RELATED"/>
    <property type="match status" value="1"/>
</dbReference>
<dbReference type="PANTHER" id="PTHR22777:SF27">
    <property type="entry name" value="MAGNESIUM AND COBALT EFFLUX PROTEIN CORC"/>
    <property type="match status" value="1"/>
</dbReference>
<dbReference type="Pfam" id="PF00571">
    <property type="entry name" value="CBS"/>
    <property type="match status" value="2"/>
</dbReference>
<dbReference type="Pfam" id="PF03471">
    <property type="entry name" value="CorC_HlyC"/>
    <property type="match status" value="1"/>
</dbReference>
<dbReference type="Pfam" id="PF21917">
    <property type="entry name" value="NMB0537_N"/>
    <property type="match status" value="1"/>
</dbReference>
<dbReference type="SMART" id="SM00116">
    <property type="entry name" value="CBS"/>
    <property type="match status" value="2"/>
</dbReference>
<dbReference type="SMART" id="SM01091">
    <property type="entry name" value="CorC_HlyC"/>
    <property type="match status" value="1"/>
</dbReference>
<dbReference type="SUPFAM" id="SSF54631">
    <property type="entry name" value="CBS-domain pair"/>
    <property type="match status" value="1"/>
</dbReference>
<dbReference type="SUPFAM" id="SSF56176">
    <property type="entry name" value="FAD-binding/transporter-associated domain-like"/>
    <property type="match status" value="1"/>
</dbReference>
<dbReference type="PROSITE" id="PS51371">
    <property type="entry name" value="CBS"/>
    <property type="match status" value="2"/>
</dbReference>
<feature type="chain" id="PRO_0000088349" description="Magnesium and cobalt efflux protein CorC">
    <location>
        <begin position="1"/>
        <end position="300"/>
    </location>
</feature>
<feature type="domain" description="CBS 1" evidence="2">
    <location>
        <begin position="75"/>
        <end position="134"/>
    </location>
</feature>
<feature type="domain" description="CBS 2" evidence="2">
    <location>
        <begin position="140"/>
        <end position="197"/>
    </location>
</feature>
<protein>
    <recommendedName>
        <fullName>Magnesium and cobalt efflux protein CorC</fullName>
    </recommendedName>
</protein>
<evidence type="ECO:0000250" key="1"/>
<evidence type="ECO:0000255" key="2">
    <source>
        <dbReference type="PROSITE-ProRule" id="PRU00703"/>
    </source>
</evidence>
<evidence type="ECO:0000305" key="3"/>
<gene>
    <name type="primary">corC</name>
    <name type="ordered locus">PM1033</name>
</gene>
<proteinExistence type="inferred from homology"/>
<name>CORC_PASMU</name>
<organism>
    <name type="scientific">Pasteurella multocida (strain Pm70)</name>
    <dbReference type="NCBI Taxonomy" id="272843"/>
    <lineage>
        <taxon>Bacteria</taxon>
        <taxon>Pseudomonadati</taxon>
        <taxon>Pseudomonadota</taxon>
        <taxon>Gammaproteobacteria</taxon>
        <taxon>Pasteurellales</taxon>
        <taxon>Pasteurellaceae</taxon>
        <taxon>Pasteurella</taxon>
    </lineage>
</organism>